<comment type="function">
    <text evidence="1">Involved in the maturation of [NiFe] hydrogenases. Required for nickel insertion into the metal center of the hydrogenase.</text>
</comment>
<comment type="similarity">
    <text evidence="1">Belongs to the HypA/HybF family.</text>
</comment>
<gene>
    <name evidence="1" type="primary">hypA</name>
    <name type="ordered locus">KPN78578_30030</name>
    <name type="ORF">KPN_03063</name>
</gene>
<organism>
    <name type="scientific">Klebsiella pneumoniae subsp. pneumoniae (strain ATCC 700721 / MGH 78578)</name>
    <dbReference type="NCBI Taxonomy" id="272620"/>
    <lineage>
        <taxon>Bacteria</taxon>
        <taxon>Pseudomonadati</taxon>
        <taxon>Pseudomonadota</taxon>
        <taxon>Gammaproteobacteria</taxon>
        <taxon>Enterobacterales</taxon>
        <taxon>Enterobacteriaceae</taxon>
        <taxon>Klebsiella/Raoultella group</taxon>
        <taxon>Klebsiella</taxon>
        <taxon>Klebsiella pneumoniae complex</taxon>
    </lineage>
</organism>
<feature type="chain" id="PRO_1000023830" description="Hydrogenase maturation factor HypA">
    <location>
        <begin position="1"/>
        <end position="114"/>
    </location>
</feature>
<feature type="binding site" evidence="1">
    <location>
        <position position="2"/>
    </location>
    <ligand>
        <name>Ni(2+)</name>
        <dbReference type="ChEBI" id="CHEBI:49786"/>
    </ligand>
</feature>
<feature type="binding site" evidence="1">
    <location>
        <position position="73"/>
    </location>
    <ligand>
        <name>Zn(2+)</name>
        <dbReference type="ChEBI" id="CHEBI:29105"/>
    </ligand>
</feature>
<feature type="binding site" evidence="1">
    <location>
        <position position="76"/>
    </location>
    <ligand>
        <name>Zn(2+)</name>
        <dbReference type="ChEBI" id="CHEBI:29105"/>
    </ligand>
</feature>
<feature type="binding site" evidence="1">
    <location>
        <position position="90"/>
    </location>
    <ligand>
        <name>Zn(2+)</name>
        <dbReference type="ChEBI" id="CHEBI:29105"/>
    </ligand>
</feature>
<feature type="binding site" evidence="1">
    <location>
        <position position="93"/>
    </location>
    <ligand>
        <name>Zn(2+)</name>
        <dbReference type="ChEBI" id="CHEBI:29105"/>
    </ligand>
</feature>
<accession>A6TCZ3</accession>
<protein>
    <recommendedName>
        <fullName evidence="1">Hydrogenase maturation factor HypA</fullName>
    </recommendedName>
</protein>
<sequence length="114" mass="12924">MHEITLSQRALEIIEQQAQQAGARRVTGVWLKVGAFSCVEASALTFCFELVCRGTLAEGCELHIAEQQAECWCDRCQQYVHLVSQHVRRCPHCNNDQLQIVADDGLQIQRLELE</sequence>
<proteinExistence type="inferred from homology"/>
<name>HYPA_KLEP7</name>
<evidence type="ECO:0000255" key="1">
    <source>
        <dbReference type="HAMAP-Rule" id="MF_00213"/>
    </source>
</evidence>
<reference key="1">
    <citation type="submission" date="2006-09" db="EMBL/GenBank/DDBJ databases">
        <authorList>
            <consortium name="The Klebsiella pneumonia Genome Sequencing Project"/>
            <person name="McClelland M."/>
            <person name="Sanderson E.K."/>
            <person name="Spieth J."/>
            <person name="Clifton W.S."/>
            <person name="Latreille P."/>
            <person name="Sabo A."/>
            <person name="Pepin K."/>
            <person name="Bhonagiri V."/>
            <person name="Porwollik S."/>
            <person name="Ali J."/>
            <person name="Wilson R.K."/>
        </authorList>
    </citation>
    <scope>NUCLEOTIDE SEQUENCE [LARGE SCALE GENOMIC DNA]</scope>
    <source>
        <strain>ATCC 700721 / MGH 78578</strain>
    </source>
</reference>
<keyword id="KW-0479">Metal-binding</keyword>
<keyword id="KW-0533">Nickel</keyword>
<keyword id="KW-0862">Zinc</keyword>
<dbReference type="EMBL" id="CP000647">
    <property type="protein sequence ID" value="ABR78464.1"/>
    <property type="molecule type" value="Genomic_DNA"/>
</dbReference>
<dbReference type="RefSeq" id="WP_002914928.1">
    <property type="nucleotide sequence ID" value="NC_009648.1"/>
</dbReference>
<dbReference type="SMR" id="A6TCZ3"/>
<dbReference type="STRING" id="272620.KPN_03063"/>
<dbReference type="PaxDb" id="272620-KPN_03063"/>
<dbReference type="EnsemblBacteria" id="ABR78464">
    <property type="protein sequence ID" value="ABR78464"/>
    <property type="gene ID" value="KPN_03063"/>
</dbReference>
<dbReference type="KEGG" id="kpn:KPN_03063"/>
<dbReference type="HOGENOM" id="CLU_126929_0_0_6"/>
<dbReference type="Proteomes" id="UP000000265">
    <property type="component" value="Chromosome"/>
</dbReference>
<dbReference type="GO" id="GO:0016151">
    <property type="term" value="F:nickel cation binding"/>
    <property type="evidence" value="ECO:0007669"/>
    <property type="project" value="UniProtKB-UniRule"/>
</dbReference>
<dbReference type="GO" id="GO:0008270">
    <property type="term" value="F:zinc ion binding"/>
    <property type="evidence" value="ECO:0007669"/>
    <property type="project" value="UniProtKB-UniRule"/>
</dbReference>
<dbReference type="GO" id="GO:0051604">
    <property type="term" value="P:protein maturation"/>
    <property type="evidence" value="ECO:0007669"/>
    <property type="project" value="InterPro"/>
</dbReference>
<dbReference type="GO" id="GO:0036211">
    <property type="term" value="P:protein modification process"/>
    <property type="evidence" value="ECO:0007669"/>
    <property type="project" value="UniProtKB-UniRule"/>
</dbReference>
<dbReference type="FunFam" id="3.30.2320.80:FF:000001">
    <property type="entry name" value="Hydrogenase maturation factor HypA"/>
    <property type="match status" value="1"/>
</dbReference>
<dbReference type="Gene3D" id="3.30.2320.80">
    <property type="match status" value="1"/>
</dbReference>
<dbReference type="HAMAP" id="MF_00213">
    <property type="entry name" value="HypA_HybF"/>
    <property type="match status" value="1"/>
</dbReference>
<dbReference type="InterPro" id="IPR020538">
    <property type="entry name" value="Hydgase_Ni_incorp_HypA/HybF_CS"/>
</dbReference>
<dbReference type="InterPro" id="IPR000688">
    <property type="entry name" value="HypA/HybF"/>
</dbReference>
<dbReference type="NCBIfam" id="TIGR00100">
    <property type="entry name" value="hypA"/>
    <property type="match status" value="1"/>
</dbReference>
<dbReference type="NCBIfam" id="NF002979">
    <property type="entry name" value="PRK03681.1"/>
    <property type="match status" value="1"/>
</dbReference>
<dbReference type="NCBIfam" id="NF009046">
    <property type="entry name" value="PRK12380.1"/>
    <property type="match status" value="1"/>
</dbReference>
<dbReference type="PANTHER" id="PTHR34535">
    <property type="entry name" value="HYDROGENASE MATURATION FACTOR HYPA"/>
    <property type="match status" value="1"/>
</dbReference>
<dbReference type="PANTHER" id="PTHR34535:SF3">
    <property type="entry name" value="HYDROGENASE MATURATION FACTOR HYPA"/>
    <property type="match status" value="1"/>
</dbReference>
<dbReference type="Pfam" id="PF01155">
    <property type="entry name" value="HypA"/>
    <property type="match status" value="1"/>
</dbReference>
<dbReference type="PIRSF" id="PIRSF004761">
    <property type="entry name" value="Hydrgn_mat_HypA"/>
    <property type="match status" value="1"/>
</dbReference>
<dbReference type="PROSITE" id="PS01249">
    <property type="entry name" value="HYPA"/>
    <property type="match status" value="1"/>
</dbReference>